<keyword id="KW-0002">3D-structure</keyword>
<keyword id="KW-0012">Acyltransferase</keyword>
<keyword id="KW-0414">Isoprene biosynthesis</keyword>
<keyword id="KW-0808">Transferase</keyword>
<sequence>MKDIGIVGYGSYIPKYRIKVEEIAKVWGKDPEAIKKGLVVNEKSVPSPDEDTATIAVEAARNAVKRAGINAEKIGAVYVGSESHPYAVKPTSATVAEAIGATPDLTAADLEFACKAGTAGIQMCMGLVGSGLIEYGMAIGADTAQGAPGDALEYTASAGGAAYIIGNKKDEMIAVFNGTYSYTTDTPDFWRREGQSYPKHGGRFTGEPAYFKHVLNAAKGIMEKMGTTVKDYDYCVFHQPNGKFYIKAAKSLGFTNEQYKYGLLTPYLGNTYSGAVPLGLSNILDHAEEGARILAVSYGSGAGSDAFDITVTERIKEVVDKAPKTLDLLNRKKYIDYAVYVKYRGKIKI</sequence>
<reference evidence="6 7" key="1">
    <citation type="journal article" date="2018" name="Proc. Natl. Acad. Sci. U.S.A.">
        <title>Archaeal acetoacetyl-CoA thiolase/HMG-CoA synthase complex channels the intermediate via a fused CoA-binding site.</title>
        <authorList>
            <person name="Vogeli B."/>
            <person name="Engilberge S."/>
            <person name="Girard E."/>
            <person name="Riobe F."/>
            <person name="Maury O."/>
            <person name="Erb T.J."/>
            <person name="Shima S."/>
            <person name="Wagner T."/>
        </authorList>
    </citation>
    <scope>X-RAY CRYSTALLOGRAPHY (2.75 ANGSTROMS) IN COMPLEX WITH COA; ACETOACETYL-COA THIOLASE AND A DUF35 PROTEIN</scope>
    <scope>FUNCTION</scope>
    <scope>CATALYTIC ACTIVITY</scope>
    <source>
        <strain>ATCC 35097 / DSM 2095 / JCM 10549 / OCM 138 / SN-1</strain>
    </source>
</reference>
<accession>A0A384E143</accession>
<name>HMGCS_METTL</name>
<comment type="function">
    <text evidence="2">Catalyzes the condensation of acetyl-CoA with acetoacetyl-CoA to form 3-hydroxy-3-methylglutaryl-CoA (HMG-CoA). Functions in the mevalonate (MVA) pathway leading to isopentenyl diphosphate (IPP), a key precursor for the biosynthesis of isoprenoid compounds that are building blocks of archaeal membrane lipids.</text>
</comment>
<comment type="catalytic activity">
    <reaction evidence="2">
        <text>acetoacetyl-CoA + acetyl-CoA + H2O = (3S)-3-hydroxy-3-methylglutaryl-CoA + CoA + H(+)</text>
        <dbReference type="Rhea" id="RHEA:10188"/>
        <dbReference type="ChEBI" id="CHEBI:15377"/>
        <dbReference type="ChEBI" id="CHEBI:15378"/>
        <dbReference type="ChEBI" id="CHEBI:43074"/>
        <dbReference type="ChEBI" id="CHEBI:57286"/>
        <dbReference type="ChEBI" id="CHEBI:57287"/>
        <dbReference type="ChEBI" id="CHEBI:57288"/>
        <dbReference type="EC" id="2.3.3.10"/>
    </reaction>
    <physiologicalReaction direction="left-to-right" evidence="4">
        <dbReference type="Rhea" id="RHEA:10189"/>
    </physiologicalReaction>
</comment>
<comment type="pathway">
    <text evidence="4">Metabolic intermediate biosynthesis; (R)-mevalonate biosynthesis; (R)-mevalonate from acetyl-CoA: step 2/3.</text>
</comment>
<comment type="subunit">
    <text evidence="2">Interacts with acetoacetyl-CoA thiolase that catalyzes the precedent step in the pathway and with a DUF35 protein. The acetoacetyl-CoA thiolase/HMG-CoA synthase complex channels the intermediate via a fused CoA-binding site, which allows for efficient coupling of the endergonic thiolase reaction with the exergonic HMGCS reaction.</text>
</comment>
<comment type="similarity">
    <text evidence="1">Belongs to the thiolase-like superfamily. Archaeal HMG-CoA synthase family.</text>
</comment>
<protein>
    <recommendedName>
        <fullName evidence="3">Hydroxymethylglutaryl-CoA synthase</fullName>
        <shortName evidence="3">HMG-CoA synthase</shortName>
        <shortName evidence="3">HMGCS</shortName>
        <ecNumber evidence="2">2.3.3.10</ecNumber>
    </recommendedName>
</protein>
<feature type="chain" id="PRO_0000461307" description="Hydroxymethylglutaryl-CoA synthase">
    <location>
        <begin position="1"/>
        <end position="349"/>
    </location>
</feature>
<feature type="active site" description="Proton donor/acceptor" evidence="1">
    <location>
        <position position="82"/>
    </location>
</feature>
<feature type="active site" description="Acyl-thioester intermediate" evidence="1">
    <location>
        <position position="114"/>
    </location>
</feature>
<feature type="active site" description="Proton donor/acceptor" evidence="1">
    <location>
        <position position="238"/>
    </location>
</feature>
<feature type="binding site" evidence="1">
    <location>
        <position position="30"/>
    </location>
    <ligand>
        <name>(3S)-3-hydroxy-3-methylglutaryl-CoA</name>
        <dbReference type="ChEBI" id="CHEBI:43074"/>
    </ligand>
</feature>
<feature type="binding site" evidence="1">
    <location>
        <position position="114"/>
    </location>
    <ligand>
        <name>(3S)-3-hydroxy-3-methylglutaryl-CoA</name>
        <dbReference type="ChEBI" id="CHEBI:43074"/>
    </ligand>
</feature>
<feature type="binding site" evidence="2 6">
    <location>
        <position position="203"/>
    </location>
    <ligand>
        <name>CoA</name>
        <dbReference type="ChEBI" id="CHEBI:57287"/>
        <note>ligand shared with acetoacetyl-CoA thiolase</note>
    </ligand>
</feature>
<feature type="binding site" evidence="1">
    <location>
        <position position="205"/>
    </location>
    <ligand>
        <name>(3S)-3-hydroxy-3-methylglutaryl-CoA</name>
        <dbReference type="ChEBI" id="CHEBI:43074"/>
    </ligand>
</feature>
<feature type="binding site" evidence="1">
    <location>
        <position position="238"/>
    </location>
    <ligand>
        <name>(3S)-3-hydroxy-3-methylglutaryl-CoA</name>
        <dbReference type="ChEBI" id="CHEBI:43074"/>
    </ligand>
</feature>
<feature type="binding site" evidence="2 6">
    <location>
        <position position="243"/>
    </location>
    <ligand>
        <name>CoA</name>
        <dbReference type="ChEBI" id="CHEBI:57287"/>
        <note>ligand shared with acetoacetyl-CoA thiolase</note>
    </ligand>
</feature>
<feature type="binding site" evidence="1">
    <location>
        <position position="247"/>
    </location>
    <ligand>
        <name>(3S)-3-hydroxy-3-methylglutaryl-CoA</name>
        <dbReference type="ChEBI" id="CHEBI:43074"/>
    </ligand>
</feature>
<feature type="binding site" evidence="1">
    <location>
        <position position="270"/>
    </location>
    <ligand>
        <name>(3S)-3-hydroxy-3-methylglutaryl-CoA</name>
        <dbReference type="ChEBI" id="CHEBI:43074"/>
    </ligand>
</feature>
<feature type="binding site" evidence="1">
    <location>
        <position position="300"/>
    </location>
    <ligand>
        <name>(3S)-3-hydroxy-3-methylglutaryl-CoA</name>
        <dbReference type="ChEBI" id="CHEBI:43074"/>
    </ligand>
</feature>
<feature type="strand" evidence="8">
    <location>
        <begin position="5"/>
        <end position="12"/>
    </location>
</feature>
<feature type="strand" evidence="8">
    <location>
        <begin position="15"/>
        <end position="19"/>
    </location>
</feature>
<feature type="helix" evidence="8">
    <location>
        <begin position="20"/>
        <end position="27"/>
    </location>
</feature>
<feature type="helix" evidence="8">
    <location>
        <begin position="31"/>
        <end position="38"/>
    </location>
</feature>
<feature type="strand" evidence="8">
    <location>
        <begin position="42"/>
        <end position="45"/>
    </location>
</feature>
<feature type="helix" evidence="8">
    <location>
        <begin position="52"/>
        <end position="67"/>
    </location>
</feature>
<feature type="helix" evidence="8">
    <location>
        <begin position="71"/>
        <end position="73"/>
    </location>
</feature>
<feature type="strand" evidence="8">
    <location>
        <begin position="74"/>
        <end position="80"/>
    </location>
</feature>
<feature type="strand" evidence="8">
    <location>
        <begin position="87"/>
        <end position="89"/>
    </location>
</feature>
<feature type="helix" evidence="8">
    <location>
        <begin position="91"/>
        <end position="98"/>
    </location>
</feature>
<feature type="strand" evidence="8">
    <location>
        <begin position="106"/>
        <end position="112"/>
    </location>
</feature>
<feature type="helix" evidence="8">
    <location>
        <begin position="113"/>
        <end position="115"/>
    </location>
</feature>
<feature type="helix" evidence="8">
    <location>
        <begin position="116"/>
        <end position="129"/>
    </location>
</feature>
<feature type="strand" evidence="8">
    <location>
        <begin position="134"/>
        <end position="143"/>
    </location>
</feature>
<feature type="helix" evidence="8">
    <location>
        <begin position="151"/>
        <end position="154"/>
    </location>
</feature>
<feature type="strand" evidence="8">
    <location>
        <begin position="158"/>
        <end position="166"/>
    </location>
</feature>
<feature type="helix" evidence="8">
    <location>
        <begin position="169"/>
        <end position="171"/>
    </location>
</feature>
<feature type="strand" evidence="8">
    <location>
        <begin position="173"/>
        <end position="186"/>
    </location>
</feature>
<feature type="strand" evidence="8">
    <location>
        <begin position="188"/>
        <end position="191"/>
    </location>
</feature>
<feature type="helix" evidence="8">
    <location>
        <begin position="202"/>
        <end position="205"/>
    </location>
</feature>
<feature type="turn" evidence="8">
    <location>
        <begin position="206"/>
        <end position="209"/>
    </location>
</feature>
<feature type="helix" evidence="8">
    <location>
        <begin position="210"/>
        <end position="225"/>
    </location>
</feature>
<feature type="helix" evidence="8">
    <location>
        <begin position="229"/>
        <end position="231"/>
    </location>
</feature>
<feature type="strand" evidence="8">
    <location>
        <begin position="233"/>
        <end position="237"/>
    </location>
</feature>
<feature type="helix" evidence="8">
    <location>
        <begin position="242"/>
        <end position="251"/>
    </location>
</feature>
<feature type="helix" evidence="8">
    <location>
        <begin position="256"/>
        <end position="259"/>
    </location>
</feature>
<feature type="turn" evidence="8">
    <location>
        <begin position="260"/>
        <end position="262"/>
    </location>
</feature>
<feature type="helix" evidence="8">
    <location>
        <begin position="265"/>
        <end position="268"/>
    </location>
</feature>
<feature type="helix" evidence="8">
    <location>
        <begin position="272"/>
        <end position="274"/>
    </location>
</feature>
<feature type="helix" evidence="8">
    <location>
        <begin position="275"/>
        <end position="286"/>
    </location>
</feature>
<feature type="strand" evidence="8">
    <location>
        <begin position="292"/>
        <end position="296"/>
    </location>
</feature>
<feature type="strand" evidence="8">
    <location>
        <begin position="301"/>
        <end position="311"/>
    </location>
</feature>
<feature type="helix" evidence="8">
    <location>
        <begin position="315"/>
        <end position="318"/>
    </location>
</feature>
<feature type="helix" evidence="8">
    <location>
        <begin position="319"/>
        <end position="321"/>
    </location>
</feature>
<feature type="helix" evidence="8">
    <location>
        <begin position="325"/>
        <end position="330"/>
    </location>
</feature>
<feature type="helix" evidence="8">
    <location>
        <begin position="337"/>
        <end position="343"/>
    </location>
</feature>
<organism evidence="5">
    <name type="scientific">Methanothermococcus thermolithotrophicus</name>
    <name type="common">Methanococcus thermolithotrophicus</name>
    <dbReference type="NCBI Taxonomy" id="2186"/>
    <lineage>
        <taxon>Archaea</taxon>
        <taxon>Methanobacteriati</taxon>
        <taxon>Methanobacteriota</taxon>
        <taxon>Methanomada group</taxon>
        <taxon>Methanococci</taxon>
        <taxon>Methanococcales</taxon>
        <taxon>Methanococcaceae</taxon>
        <taxon>Methanothermococcus</taxon>
    </lineage>
</organism>
<proteinExistence type="evidence at protein level"/>
<dbReference type="EC" id="2.3.3.10" evidence="2"/>
<dbReference type="RefSeq" id="WP_018154492.1">
    <property type="nucleotide sequence ID" value="NZ_OX296583.1"/>
</dbReference>
<dbReference type="PDB" id="6ESQ">
    <property type="method" value="X-ray"/>
    <property type="resolution" value="2.95 A"/>
    <property type="chains" value="I/J/K/L=1-349"/>
</dbReference>
<dbReference type="PDB" id="6ET9">
    <property type="method" value="X-ray"/>
    <property type="resolution" value="2.75 A"/>
    <property type="chains" value="I/J/K/L=1-349"/>
</dbReference>
<dbReference type="PDBsum" id="6ESQ"/>
<dbReference type="PDBsum" id="6ET9"/>
<dbReference type="SMR" id="A0A384E143"/>
<dbReference type="GeneID" id="75542300"/>
<dbReference type="BioCyc" id="MetaCyc:MONOMER-21123"/>
<dbReference type="BRENDA" id="2.3.3.10">
    <property type="organism ID" value="3266"/>
</dbReference>
<dbReference type="UniPathway" id="UPA00058">
    <property type="reaction ID" value="UER00102"/>
</dbReference>
<dbReference type="GO" id="GO:0003985">
    <property type="term" value="F:acetyl-CoA C-acetyltransferase activity"/>
    <property type="evidence" value="ECO:0007669"/>
    <property type="project" value="UniProtKB-UniRule"/>
</dbReference>
<dbReference type="GO" id="GO:0004421">
    <property type="term" value="F:hydroxymethylglutaryl-CoA synthase activity"/>
    <property type="evidence" value="ECO:0007669"/>
    <property type="project" value="InterPro"/>
</dbReference>
<dbReference type="GO" id="GO:0010142">
    <property type="term" value="P:farnesyl diphosphate biosynthetic process, mevalonate pathway"/>
    <property type="evidence" value="ECO:0007669"/>
    <property type="project" value="TreeGrafter"/>
</dbReference>
<dbReference type="GO" id="GO:0019287">
    <property type="term" value="P:isopentenyl diphosphate biosynthetic process, mevalonate pathway"/>
    <property type="evidence" value="ECO:0007669"/>
    <property type="project" value="UniProtKB-UniRule"/>
</dbReference>
<dbReference type="CDD" id="cd00827">
    <property type="entry name" value="init_cond_enzymes"/>
    <property type="match status" value="1"/>
</dbReference>
<dbReference type="FunFam" id="3.40.47.10:FF:000046">
    <property type="entry name" value="UPF0219 protein M1627_1703"/>
    <property type="match status" value="1"/>
</dbReference>
<dbReference type="Gene3D" id="3.40.47.10">
    <property type="match status" value="1"/>
</dbReference>
<dbReference type="HAMAP" id="MF_01409">
    <property type="entry name" value="HMG_CoA_synth_arch"/>
    <property type="match status" value="1"/>
</dbReference>
<dbReference type="InterPro" id="IPR013747">
    <property type="entry name" value="ACP_syn_III_C"/>
</dbReference>
<dbReference type="InterPro" id="IPR013528">
    <property type="entry name" value="HMG_CoA_synth_N"/>
</dbReference>
<dbReference type="InterPro" id="IPR004656">
    <property type="entry name" value="HMG_CoA_Synthase"/>
</dbReference>
<dbReference type="InterPro" id="IPR016039">
    <property type="entry name" value="Thiolase-like"/>
</dbReference>
<dbReference type="NCBIfam" id="TIGR00748">
    <property type="entry name" value="HMG_CoA_syn_Arc"/>
    <property type="match status" value="1"/>
</dbReference>
<dbReference type="NCBIfam" id="NF003274">
    <property type="entry name" value="PRK04262.1"/>
    <property type="match status" value="1"/>
</dbReference>
<dbReference type="PANTHER" id="PTHR43323">
    <property type="entry name" value="3-HYDROXY-3-METHYLGLUTARYL COENZYME A SYNTHASE"/>
    <property type="match status" value="1"/>
</dbReference>
<dbReference type="PANTHER" id="PTHR43323:SF2">
    <property type="entry name" value="HYDROXYMETHYLGLUTARYL-COA SYNTHASE"/>
    <property type="match status" value="1"/>
</dbReference>
<dbReference type="Pfam" id="PF08541">
    <property type="entry name" value="ACP_syn_III_C"/>
    <property type="match status" value="1"/>
</dbReference>
<dbReference type="Pfam" id="PF01154">
    <property type="entry name" value="HMG_CoA_synt_N"/>
    <property type="match status" value="1"/>
</dbReference>
<dbReference type="SUPFAM" id="SSF53901">
    <property type="entry name" value="Thiolase-like"/>
    <property type="match status" value="2"/>
</dbReference>
<evidence type="ECO:0000255" key="1">
    <source>
        <dbReference type="HAMAP-Rule" id="MF_01409"/>
    </source>
</evidence>
<evidence type="ECO:0000269" key="2">
    <source>
    </source>
</evidence>
<evidence type="ECO:0000303" key="3">
    <source>
    </source>
</evidence>
<evidence type="ECO:0000305" key="4">
    <source>
    </source>
</evidence>
<evidence type="ECO:0000312" key="5">
    <source>
        <dbReference type="PDB" id="6ET9"/>
    </source>
</evidence>
<evidence type="ECO:0007744" key="6">
    <source>
        <dbReference type="PDB" id="6ESQ"/>
    </source>
</evidence>
<evidence type="ECO:0007744" key="7">
    <source>
        <dbReference type="PDB" id="6ET9"/>
    </source>
</evidence>
<evidence type="ECO:0007829" key="8">
    <source>
        <dbReference type="PDB" id="6ET9"/>
    </source>
</evidence>